<protein>
    <recommendedName>
        <fullName evidence="1">Large ribosomal subunit protein uL2</fullName>
    </recommendedName>
    <alternativeName>
        <fullName evidence="3">50S ribosomal protein L2</fullName>
    </alternativeName>
</protein>
<comment type="function">
    <text evidence="1">One of the primary rRNA binding proteins. Required for association of the 30S and 50S subunits to form the 70S ribosome, for tRNA binding and peptide bond formation. It has been suggested to have peptidyltransferase activity; this is somewhat controversial. Makes several contacts with the 16S rRNA in the 70S ribosome.</text>
</comment>
<comment type="subunit">
    <text evidence="1">Part of the 50S ribosomal subunit. Forms a bridge to the 30S subunit in the 70S ribosome.</text>
</comment>
<comment type="similarity">
    <text evidence="1">Belongs to the universal ribosomal protein uL2 family.</text>
</comment>
<proteinExistence type="inferred from homology"/>
<organism>
    <name type="scientific">Vibrio vulnificus (strain YJ016)</name>
    <dbReference type="NCBI Taxonomy" id="196600"/>
    <lineage>
        <taxon>Bacteria</taxon>
        <taxon>Pseudomonadati</taxon>
        <taxon>Pseudomonadota</taxon>
        <taxon>Gammaproteobacteria</taxon>
        <taxon>Vibrionales</taxon>
        <taxon>Vibrionaceae</taxon>
        <taxon>Vibrio</taxon>
    </lineage>
</organism>
<sequence length="274" mass="29880">MAIVKCKPTSAGRRHVVKVVNADLHKGKPYAPLLEKNSKNGGRNNNGRITVRHIGGGHKQHYRVVDFKRTKDGIPAKVERLEYDPNRSANIALVLYADGERRYIIAPKGMQAGDVIQSGVDAPIKAGNTLPMRNIPVGSTIHCVELTPGKGAQLARSAGAYAQLVARDGSYVTIRLRSGEMRKVLSEGRATIGEVGNSEHMLRELGKAGASRWRGVRPTVRGVVMNPVDHPHGGGEGRTSGGRHPVSPWGVPTKGYKTRSNKRTDKYIVRRRNK</sequence>
<dbReference type="EMBL" id="BA000037">
    <property type="protein sequence ID" value="BAC93142.1"/>
    <property type="molecule type" value="Genomic_DNA"/>
</dbReference>
<dbReference type="RefSeq" id="WP_011078828.1">
    <property type="nucleotide sequence ID" value="NC_005139.1"/>
</dbReference>
<dbReference type="SMR" id="Q7MPI5"/>
<dbReference type="STRING" id="672.VV93_v1c03490"/>
<dbReference type="KEGG" id="vvy:VV0378"/>
<dbReference type="eggNOG" id="COG0090">
    <property type="taxonomic scope" value="Bacteria"/>
</dbReference>
<dbReference type="HOGENOM" id="CLU_036235_2_1_6"/>
<dbReference type="Proteomes" id="UP000002675">
    <property type="component" value="Chromosome I"/>
</dbReference>
<dbReference type="GO" id="GO:0015934">
    <property type="term" value="C:large ribosomal subunit"/>
    <property type="evidence" value="ECO:0007669"/>
    <property type="project" value="InterPro"/>
</dbReference>
<dbReference type="GO" id="GO:0019843">
    <property type="term" value="F:rRNA binding"/>
    <property type="evidence" value="ECO:0007669"/>
    <property type="project" value="UniProtKB-UniRule"/>
</dbReference>
<dbReference type="GO" id="GO:0003735">
    <property type="term" value="F:structural constituent of ribosome"/>
    <property type="evidence" value="ECO:0007669"/>
    <property type="project" value="InterPro"/>
</dbReference>
<dbReference type="GO" id="GO:0016740">
    <property type="term" value="F:transferase activity"/>
    <property type="evidence" value="ECO:0007669"/>
    <property type="project" value="InterPro"/>
</dbReference>
<dbReference type="GO" id="GO:0002181">
    <property type="term" value="P:cytoplasmic translation"/>
    <property type="evidence" value="ECO:0007669"/>
    <property type="project" value="TreeGrafter"/>
</dbReference>
<dbReference type="FunFam" id="2.30.30.30:FF:000001">
    <property type="entry name" value="50S ribosomal protein L2"/>
    <property type="match status" value="1"/>
</dbReference>
<dbReference type="FunFam" id="2.40.50.140:FF:000003">
    <property type="entry name" value="50S ribosomal protein L2"/>
    <property type="match status" value="1"/>
</dbReference>
<dbReference type="FunFam" id="4.10.950.10:FF:000001">
    <property type="entry name" value="50S ribosomal protein L2"/>
    <property type="match status" value="1"/>
</dbReference>
<dbReference type="Gene3D" id="2.30.30.30">
    <property type="match status" value="1"/>
</dbReference>
<dbReference type="Gene3D" id="2.40.50.140">
    <property type="entry name" value="Nucleic acid-binding proteins"/>
    <property type="match status" value="1"/>
</dbReference>
<dbReference type="Gene3D" id="4.10.950.10">
    <property type="entry name" value="Ribosomal protein L2, domain 3"/>
    <property type="match status" value="1"/>
</dbReference>
<dbReference type="HAMAP" id="MF_01320_B">
    <property type="entry name" value="Ribosomal_uL2_B"/>
    <property type="match status" value="1"/>
</dbReference>
<dbReference type="InterPro" id="IPR012340">
    <property type="entry name" value="NA-bd_OB-fold"/>
</dbReference>
<dbReference type="InterPro" id="IPR014722">
    <property type="entry name" value="Rib_uL2_dom2"/>
</dbReference>
<dbReference type="InterPro" id="IPR002171">
    <property type="entry name" value="Ribosomal_uL2"/>
</dbReference>
<dbReference type="InterPro" id="IPR005880">
    <property type="entry name" value="Ribosomal_uL2_bac/org-type"/>
</dbReference>
<dbReference type="InterPro" id="IPR022669">
    <property type="entry name" value="Ribosomal_uL2_C"/>
</dbReference>
<dbReference type="InterPro" id="IPR022671">
    <property type="entry name" value="Ribosomal_uL2_CS"/>
</dbReference>
<dbReference type="InterPro" id="IPR014726">
    <property type="entry name" value="Ribosomal_uL2_dom3"/>
</dbReference>
<dbReference type="InterPro" id="IPR022666">
    <property type="entry name" value="Ribosomal_uL2_RNA-bd_dom"/>
</dbReference>
<dbReference type="InterPro" id="IPR008991">
    <property type="entry name" value="Translation_prot_SH3-like_sf"/>
</dbReference>
<dbReference type="NCBIfam" id="TIGR01171">
    <property type="entry name" value="rplB_bact"/>
    <property type="match status" value="1"/>
</dbReference>
<dbReference type="PANTHER" id="PTHR13691:SF5">
    <property type="entry name" value="LARGE RIBOSOMAL SUBUNIT PROTEIN UL2M"/>
    <property type="match status" value="1"/>
</dbReference>
<dbReference type="PANTHER" id="PTHR13691">
    <property type="entry name" value="RIBOSOMAL PROTEIN L2"/>
    <property type="match status" value="1"/>
</dbReference>
<dbReference type="Pfam" id="PF00181">
    <property type="entry name" value="Ribosomal_L2"/>
    <property type="match status" value="1"/>
</dbReference>
<dbReference type="Pfam" id="PF03947">
    <property type="entry name" value="Ribosomal_L2_C"/>
    <property type="match status" value="1"/>
</dbReference>
<dbReference type="PIRSF" id="PIRSF002158">
    <property type="entry name" value="Ribosomal_L2"/>
    <property type="match status" value="1"/>
</dbReference>
<dbReference type="SMART" id="SM01383">
    <property type="entry name" value="Ribosomal_L2"/>
    <property type="match status" value="1"/>
</dbReference>
<dbReference type="SMART" id="SM01382">
    <property type="entry name" value="Ribosomal_L2_C"/>
    <property type="match status" value="1"/>
</dbReference>
<dbReference type="SUPFAM" id="SSF50249">
    <property type="entry name" value="Nucleic acid-binding proteins"/>
    <property type="match status" value="1"/>
</dbReference>
<dbReference type="SUPFAM" id="SSF50104">
    <property type="entry name" value="Translation proteins SH3-like domain"/>
    <property type="match status" value="1"/>
</dbReference>
<dbReference type="PROSITE" id="PS00467">
    <property type="entry name" value="RIBOSOMAL_L2"/>
    <property type="match status" value="1"/>
</dbReference>
<gene>
    <name evidence="1" type="primary">rplB</name>
    <name type="ordered locus">VV0378</name>
</gene>
<accession>Q7MPI5</accession>
<feature type="chain" id="PRO_0000129650" description="Large ribosomal subunit protein uL2">
    <location>
        <begin position="1"/>
        <end position="274"/>
    </location>
</feature>
<feature type="region of interest" description="Disordered" evidence="2">
    <location>
        <begin position="223"/>
        <end position="265"/>
    </location>
</feature>
<keyword id="KW-0687">Ribonucleoprotein</keyword>
<keyword id="KW-0689">Ribosomal protein</keyword>
<keyword id="KW-0694">RNA-binding</keyword>
<keyword id="KW-0699">rRNA-binding</keyword>
<name>RL2_VIBVY</name>
<evidence type="ECO:0000255" key="1">
    <source>
        <dbReference type="HAMAP-Rule" id="MF_01320"/>
    </source>
</evidence>
<evidence type="ECO:0000256" key="2">
    <source>
        <dbReference type="SAM" id="MobiDB-lite"/>
    </source>
</evidence>
<evidence type="ECO:0000305" key="3"/>
<reference key="1">
    <citation type="journal article" date="2003" name="Genome Res.">
        <title>Comparative genome analysis of Vibrio vulnificus, a marine pathogen.</title>
        <authorList>
            <person name="Chen C.-Y."/>
            <person name="Wu K.-M."/>
            <person name="Chang Y.-C."/>
            <person name="Chang C.-H."/>
            <person name="Tsai H.-C."/>
            <person name="Liao T.-L."/>
            <person name="Liu Y.-M."/>
            <person name="Chen H.-J."/>
            <person name="Shen A.B.-T."/>
            <person name="Li J.-C."/>
            <person name="Su T.-L."/>
            <person name="Shao C.-P."/>
            <person name="Lee C.-T."/>
            <person name="Hor L.-I."/>
            <person name="Tsai S.-F."/>
        </authorList>
    </citation>
    <scope>NUCLEOTIDE SEQUENCE [LARGE SCALE GENOMIC DNA]</scope>
    <source>
        <strain>YJ016</strain>
    </source>
</reference>